<evidence type="ECO:0000250" key="1">
    <source>
        <dbReference type="UniProtKB" id="Q56VL3"/>
    </source>
</evidence>
<evidence type="ECO:0000256" key="2">
    <source>
        <dbReference type="SAM" id="MobiDB-lite"/>
    </source>
</evidence>
<organism>
    <name type="scientific">Bos taurus</name>
    <name type="common">Bovine</name>
    <dbReference type="NCBI Taxonomy" id="9913"/>
    <lineage>
        <taxon>Eukaryota</taxon>
        <taxon>Metazoa</taxon>
        <taxon>Chordata</taxon>
        <taxon>Craniata</taxon>
        <taxon>Vertebrata</taxon>
        <taxon>Euteleostomi</taxon>
        <taxon>Mammalia</taxon>
        <taxon>Eutheria</taxon>
        <taxon>Laurasiatheria</taxon>
        <taxon>Artiodactyla</taxon>
        <taxon>Ruminantia</taxon>
        <taxon>Pecora</taxon>
        <taxon>Bovidae</taxon>
        <taxon>Bovinae</taxon>
        <taxon>Bos</taxon>
    </lineage>
</organism>
<feature type="chain" id="PRO_0000299391" description="OCIA domain-containing protein 2">
    <location>
        <begin position="1"/>
        <end position="154"/>
    </location>
</feature>
<feature type="domain" description="OCIA">
    <location>
        <begin position="1"/>
        <end position="120"/>
    </location>
</feature>
<feature type="region of interest" description="Disordered" evidence="2">
    <location>
        <begin position="1"/>
        <end position="23"/>
    </location>
</feature>
<feature type="modified residue" description="N6-acetyllysine" evidence="1">
    <location>
        <position position="41"/>
    </location>
</feature>
<accession>Q3SYY7</accession>
<comment type="function">
    <text evidence="1">Has an essential role in the assembly of mitochondrial respiratory chain complex III. Is also required for STAT3 activation and plays a role in cell migration.</text>
</comment>
<comment type="subunit">
    <text evidence="1">Interacts (via OCIA domain) with OCIAD1/ASRIJ and STAT3.</text>
</comment>
<comment type="subcellular location">
    <subcellularLocation>
        <location evidence="1">Endosome</location>
    </subcellularLocation>
    <subcellularLocation>
        <location evidence="1">Mitochondrion</location>
    </subcellularLocation>
    <subcellularLocation>
        <location evidence="1">Mitochondrion inner membrane</location>
    </subcellularLocation>
</comment>
<keyword id="KW-0007">Acetylation</keyword>
<keyword id="KW-0967">Endosome</keyword>
<keyword id="KW-0472">Membrane</keyword>
<keyword id="KW-0496">Mitochondrion</keyword>
<keyword id="KW-0999">Mitochondrion inner membrane</keyword>
<keyword id="KW-1185">Reference proteome</keyword>
<proteinExistence type="evidence at transcript level"/>
<sequence>MASVSTHENQEKGPHLPPPSKQSLLFCPKSKLHIHRSEISKIIRECQEESFWKRALPFSLVSMLVTQGLVHHGYLAANPRFGSLPKVALAGILGFGLGKASYIGVCQSKFHSFEGQLRGAGFGPGHNRHCLLTCEECKTKHGLSQERSSQPSAS</sequence>
<protein>
    <recommendedName>
        <fullName>OCIA domain-containing protein 2</fullName>
    </recommendedName>
</protein>
<gene>
    <name type="primary">OCIAD2</name>
</gene>
<dbReference type="EMBL" id="BC103326">
    <property type="protein sequence ID" value="AAI03327.1"/>
    <property type="molecule type" value="mRNA"/>
</dbReference>
<dbReference type="RefSeq" id="NP_001029430.1">
    <property type="nucleotide sequence ID" value="NM_001034258.2"/>
</dbReference>
<dbReference type="RefSeq" id="XP_005208006.1">
    <property type="nucleotide sequence ID" value="XM_005207949.5"/>
</dbReference>
<dbReference type="FunCoup" id="Q3SYY7">
    <property type="interactions" value="95"/>
</dbReference>
<dbReference type="STRING" id="9913.ENSBTAP00000027443"/>
<dbReference type="PaxDb" id="9913-ENSBTAP00000027443"/>
<dbReference type="Ensembl" id="ENSBTAT00000027443.5">
    <property type="protein sequence ID" value="ENSBTAP00000027443.4"/>
    <property type="gene ID" value="ENSBTAG00000001839.5"/>
</dbReference>
<dbReference type="GeneID" id="505877"/>
<dbReference type="KEGG" id="bta:505877"/>
<dbReference type="CTD" id="132299"/>
<dbReference type="VEuPathDB" id="HostDB:ENSBTAG00000001839"/>
<dbReference type="VGNC" id="VGNC:32396">
    <property type="gene designation" value="OCIAD2"/>
</dbReference>
<dbReference type="eggNOG" id="ENOG502S4DE">
    <property type="taxonomic scope" value="Eukaryota"/>
</dbReference>
<dbReference type="GeneTree" id="ENSGT00530000063690"/>
<dbReference type="HOGENOM" id="CLU_109198_0_0_1"/>
<dbReference type="InParanoid" id="Q3SYY7"/>
<dbReference type="OMA" id="GIGPWSK"/>
<dbReference type="OrthoDB" id="10003372at2759"/>
<dbReference type="TreeFam" id="TF327106"/>
<dbReference type="Proteomes" id="UP000009136">
    <property type="component" value="Chromosome 6"/>
</dbReference>
<dbReference type="Bgee" id="ENSBTAG00000001839">
    <property type="expression patterns" value="Expressed in metanephros cortex and 104 other cell types or tissues"/>
</dbReference>
<dbReference type="GO" id="GO:0005768">
    <property type="term" value="C:endosome"/>
    <property type="evidence" value="ECO:0007669"/>
    <property type="project" value="UniProtKB-SubCell"/>
</dbReference>
<dbReference type="GO" id="GO:0009617">
    <property type="term" value="P:response to bacterium"/>
    <property type="evidence" value="ECO:0007669"/>
    <property type="project" value="Ensembl"/>
</dbReference>
<dbReference type="InterPro" id="IPR040187">
    <property type="entry name" value="OCAD1/2"/>
</dbReference>
<dbReference type="InterPro" id="IPR009764">
    <property type="entry name" value="OCIA_dom"/>
</dbReference>
<dbReference type="PANTHER" id="PTHR13336:SF2">
    <property type="entry name" value="OCIA DOMAIN-CONTAINING PROTEIN 2"/>
    <property type="match status" value="1"/>
</dbReference>
<dbReference type="PANTHER" id="PTHR13336">
    <property type="entry name" value="OVARIAN CARCINOMA IMMUNOREACTIVE ANTIGEN"/>
    <property type="match status" value="1"/>
</dbReference>
<dbReference type="Pfam" id="PF07051">
    <property type="entry name" value="OCIA"/>
    <property type="match status" value="1"/>
</dbReference>
<reference key="1">
    <citation type="submission" date="2005-08" db="EMBL/GenBank/DDBJ databases">
        <authorList>
            <consortium name="NIH - Mammalian Gene Collection (MGC) project"/>
        </authorList>
    </citation>
    <scope>NUCLEOTIDE SEQUENCE [LARGE SCALE MRNA]</scope>
    <source>
        <strain>Crossbred X Angus</strain>
        <tissue>Ileum</tissue>
    </source>
</reference>
<name>OCAD2_BOVIN</name>